<reference key="1">
    <citation type="journal article" date="2005" name="Nucleic Acids Res.">
        <title>The genome sequence of Xanthomonas oryzae pathovar oryzae KACC10331, the bacterial blight pathogen of rice.</title>
        <authorList>
            <person name="Lee B.-M."/>
            <person name="Park Y.-J."/>
            <person name="Park D.-S."/>
            <person name="Kang H.-W."/>
            <person name="Kim J.-G."/>
            <person name="Song E.-S."/>
            <person name="Park I.-C."/>
            <person name="Yoon U.-H."/>
            <person name="Hahn J.-H."/>
            <person name="Koo B.-S."/>
            <person name="Lee G.-B."/>
            <person name="Kim H."/>
            <person name="Park H.-S."/>
            <person name="Yoon K.-O."/>
            <person name="Kim J.-H."/>
            <person name="Jung C.-H."/>
            <person name="Koh N.-H."/>
            <person name="Seo J.-S."/>
            <person name="Go S.-J."/>
        </authorList>
    </citation>
    <scope>NUCLEOTIDE SEQUENCE [LARGE SCALE GENOMIC DNA]</scope>
    <source>
        <strain>KACC10331 / KXO85</strain>
    </source>
</reference>
<feature type="chain" id="PRO_0000150222" description="Phosphoserine aminotransferase">
    <location>
        <begin position="1"/>
        <end position="361"/>
    </location>
</feature>
<feature type="binding site" evidence="1">
    <location>
        <position position="42"/>
    </location>
    <ligand>
        <name>L-glutamate</name>
        <dbReference type="ChEBI" id="CHEBI:29985"/>
    </ligand>
</feature>
<feature type="binding site" evidence="1">
    <location>
        <begin position="76"/>
        <end position="77"/>
    </location>
    <ligand>
        <name>pyridoxal 5'-phosphate</name>
        <dbReference type="ChEBI" id="CHEBI:597326"/>
    </ligand>
</feature>
<feature type="binding site" evidence="1">
    <location>
        <position position="102"/>
    </location>
    <ligand>
        <name>pyridoxal 5'-phosphate</name>
        <dbReference type="ChEBI" id="CHEBI:597326"/>
    </ligand>
</feature>
<feature type="binding site" evidence="1">
    <location>
        <position position="152"/>
    </location>
    <ligand>
        <name>pyridoxal 5'-phosphate</name>
        <dbReference type="ChEBI" id="CHEBI:597326"/>
    </ligand>
</feature>
<feature type="binding site" evidence="1">
    <location>
        <position position="172"/>
    </location>
    <ligand>
        <name>pyridoxal 5'-phosphate</name>
        <dbReference type="ChEBI" id="CHEBI:597326"/>
    </ligand>
</feature>
<feature type="binding site" evidence="1">
    <location>
        <position position="195"/>
    </location>
    <ligand>
        <name>pyridoxal 5'-phosphate</name>
        <dbReference type="ChEBI" id="CHEBI:597326"/>
    </ligand>
</feature>
<feature type="binding site" evidence="1">
    <location>
        <begin position="237"/>
        <end position="238"/>
    </location>
    <ligand>
        <name>pyridoxal 5'-phosphate</name>
        <dbReference type="ChEBI" id="CHEBI:597326"/>
    </ligand>
</feature>
<feature type="modified residue" description="N6-(pyridoxal phosphate)lysine" evidence="1">
    <location>
        <position position="196"/>
    </location>
</feature>
<sequence length="361" mass="38732">MTRAFNFSAGPATLPESVLRQAQAEMVEWNGVGASIVEISHRSADFMAVAAAAEADLRSLLSIPDDYAVMFTAGGATTIQALLPLNFAAPGQAADYVITGHWGKTAIKQASPYVDARIAADAETGGFLDIPPAASWTLSPHSAYVHITANETIHGVEFRDTPEVGTLPLFADFSSSIASEPLDISRYGLIYAGAQKNLGPVGISVVIVRRDLLERAGQPRADIFNYASHVARDSMLNTPPTWNWYLLGLTVKWMLEQGGVQEFARRNAEKAALVYGAIDGAGGFYRNLITPAVRSRMNIPFFLPDEQLDALFVSESKAAGLLALKGHKAVGGIRASLYNAMPLAGAQALANFMHDFQQRHG</sequence>
<keyword id="KW-0028">Amino-acid biosynthesis</keyword>
<keyword id="KW-0032">Aminotransferase</keyword>
<keyword id="KW-0963">Cytoplasm</keyword>
<keyword id="KW-0663">Pyridoxal phosphate</keyword>
<keyword id="KW-0664">Pyridoxine biosynthesis</keyword>
<keyword id="KW-1185">Reference proteome</keyword>
<keyword id="KW-0718">Serine biosynthesis</keyword>
<keyword id="KW-0808">Transferase</keyword>
<comment type="function">
    <text evidence="1">Catalyzes the reversible conversion of 3-phosphohydroxypyruvate to phosphoserine and of 3-hydroxy-2-oxo-4-phosphonooxybutanoate to phosphohydroxythreonine.</text>
</comment>
<comment type="catalytic activity">
    <reaction evidence="1">
        <text>O-phospho-L-serine + 2-oxoglutarate = 3-phosphooxypyruvate + L-glutamate</text>
        <dbReference type="Rhea" id="RHEA:14329"/>
        <dbReference type="ChEBI" id="CHEBI:16810"/>
        <dbReference type="ChEBI" id="CHEBI:18110"/>
        <dbReference type="ChEBI" id="CHEBI:29985"/>
        <dbReference type="ChEBI" id="CHEBI:57524"/>
        <dbReference type="EC" id="2.6.1.52"/>
    </reaction>
</comment>
<comment type="catalytic activity">
    <reaction evidence="1">
        <text>4-(phosphooxy)-L-threonine + 2-oxoglutarate = (R)-3-hydroxy-2-oxo-4-phosphooxybutanoate + L-glutamate</text>
        <dbReference type="Rhea" id="RHEA:16573"/>
        <dbReference type="ChEBI" id="CHEBI:16810"/>
        <dbReference type="ChEBI" id="CHEBI:29985"/>
        <dbReference type="ChEBI" id="CHEBI:58452"/>
        <dbReference type="ChEBI" id="CHEBI:58538"/>
        <dbReference type="EC" id="2.6.1.52"/>
    </reaction>
</comment>
<comment type="cofactor">
    <cofactor evidence="1">
        <name>pyridoxal 5'-phosphate</name>
        <dbReference type="ChEBI" id="CHEBI:597326"/>
    </cofactor>
    <text evidence="1">Binds 1 pyridoxal phosphate per subunit.</text>
</comment>
<comment type="pathway">
    <text evidence="1">Amino-acid biosynthesis; L-serine biosynthesis; L-serine from 3-phospho-D-glycerate: step 2/3.</text>
</comment>
<comment type="pathway">
    <text evidence="1">Cofactor biosynthesis; pyridoxine 5'-phosphate biosynthesis; pyridoxine 5'-phosphate from D-erythrose 4-phosphate: step 3/5.</text>
</comment>
<comment type="subunit">
    <text evidence="1">Homodimer.</text>
</comment>
<comment type="subcellular location">
    <subcellularLocation>
        <location evidence="1">Cytoplasm</location>
    </subcellularLocation>
</comment>
<comment type="similarity">
    <text evidence="1">Belongs to the class-V pyridoxal-phosphate-dependent aminotransferase family. SerC subfamily.</text>
</comment>
<dbReference type="EC" id="2.6.1.52" evidence="1"/>
<dbReference type="EMBL" id="AE013598">
    <property type="protein sequence ID" value="AAW75642.1"/>
    <property type="molecule type" value="Genomic_DNA"/>
</dbReference>
<dbReference type="SMR" id="Q5H079"/>
<dbReference type="STRING" id="291331.XOO2388"/>
<dbReference type="KEGG" id="xoo:XOO2388"/>
<dbReference type="HOGENOM" id="CLU_034866_0_2_6"/>
<dbReference type="UniPathway" id="UPA00135">
    <property type="reaction ID" value="UER00197"/>
</dbReference>
<dbReference type="UniPathway" id="UPA00244">
    <property type="reaction ID" value="UER00311"/>
</dbReference>
<dbReference type="Proteomes" id="UP000006735">
    <property type="component" value="Chromosome"/>
</dbReference>
<dbReference type="GO" id="GO:0005737">
    <property type="term" value="C:cytoplasm"/>
    <property type="evidence" value="ECO:0007669"/>
    <property type="project" value="UniProtKB-SubCell"/>
</dbReference>
<dbReference type="GO" id="GO:0004648">
    <property type="term" value="F:O-phospho-L-serine:2-oxoglutarate aminotransferase activity"/>
    <property type="evidence" value="ECO:0007669"/>
    <property type="project" value="UniProtKB-UniRule"/>
</dbReference>
<dbReference type="GO" id="GO:0030170">
    <property type="term" value="F:pyridoxal phosphate binding"/>
    <property type="evidence" value="ECO:0007669"/>
    <property type="project" value="UniProtKB-UniRule"/>
</dbReference>
<dbReference type="GO" id="GO:0006564">
    <property type="term" value="P:L-serine biosynthetic process"/>
    <property type="evidence" value="ECO:0007669"/>
    <property type="project" value="UniProtKB-UniRule"/>
</dbReference>
<dbReference type="GO" id="GO:0008615">
    <property type="term" value="P:pyridoxine biosynthetic process"/>
    <property type="evidence" value="ECO:0007669"/>
    <property type="project" value="UniProtKB-UniRule"/>
</dbReference>
<dbReference type="FunFam" id="3.40.640.10:FF:000010">
    <property type="entry name" value="Phosphoserine aminotransferase"/>
    <property type="match status" value="1"/>
</dbReference>
<dbReference type="FunFam" id="3.90.1150.10:FF:000006">
    <property type="entry name" value="Phosphoserine aminotransferase"/>
    <property type="match status" value="1"/>
</dbReference>
<dbReference type="Gene3D" id="3.90.1150.10">
    <property type="entry name" value="Aspartate Aminotransferase, domain 1"/>
    <property type="match status" value="1"/>
</dbReference>
<dbReference type="Gene3D" id="3.40.640.10">
    <property type="entry name" value="Type I PLP-dependent aspartate aminotransferase-like (Major domain)"/>
    <property type="match status" value="1"/>
</dbReference>
<dbReference type="HAMAP" id="MF_00160">
    <property type="entry name" value="SerC_aminotrans_5"/>
    <property type="match status" value="1"/>
</dbReference>
<dbReference type="InterPro" id="IPR000192">
    <property type="entry name" value="Aminotrans_V_dom"/>
</dbReference>
<dbReference type="InterPro" id="IPR020578">
    <property type="entry name" value="Aminotrans_V_PyrdxlP_BS"/>
</dbReference>
<dbReference type="InterPro" id="IPR022278">
    <property type="entry name" value="Pser_aminoTfrase"/>
</dbReference>
<dbReference type="InterPro" id="IPR015424">
    <property type="entry name" value="PyrdxlP-dep_Trfase"/>
</dbReference>
<dbReference type="InterPro" id="IPR015421">
    <property type="entry name" value="PyrdxlP-dep_Trfase_major"/>
</dbReference>
<dbReference type="InterPro" id="IPR015422">
    <property type="entry name" value="PyrdxlP-dep_Trfase_small"/>
</dbReference>
<dbReference type="NCBIfam" id="NF003764">
    <property type="entry name" value="PRK05355.1"/>
    <property type="match status" value="1"/>
</dbReference>
<dbReference type="NCBIfam" id="TIGR01364">
    <property type="entry name" value="serC_1"/>
    <property type="match status" value="1"/>
</dbReference>
<dbReference type="PANTHER" id="PTHR43247">
    <property type="entry name" value="PHOSPHOSERINE AMINOTRANSFERASE"/>
    <property type="match status" value="1"/>
</dbReference>
<dbReference type="PANTHER" id="PTHR43247:SF1">
    <property type="entry name" value="PHOSPHOSERINE AMINOTRANSFERASE"/>
    <property type="match status" value="1"/>
</dbReference>
<dbReference type="Pfam" id="PF00266">
    <property type="entry name" value="Aminotran_5"/>
    <property type="match status" value="1"/>
</dbReference>
<dbReference type="PIRSF" id="PIRSF000525">
    <property type="entry name" value="SerC"/>
    <property type="match status" value="1"/>
</dbReference>
<dbReference type="SUPFAM" id="SSF53383">
    <property type="entry name" value="PLP-dependent transferases"/>
    <property type="match status" value="1"/>
</dbReference>
<dbReference type="PROSITE" id="PS00595">
    <property type="entry name" value="AA_TRANSFER_CLASS_5"/>
    <property type="match status" value="1"/>
</dbReference>
<organism>
    <name type="scientific">Xanthomonas oryzae pv. oryzae (strain KACC10331 / KXO85)</name>
    <dbReference type="NCBI Taxonomy" id="291331"/>
    <lineage>
        <taxon>Bacteria</taxon>
        <taxon>Pseudomonadati</taxon>
        <taxon>Pseudomonadota</taxon>
        <taxon>Gammaproteobacteria</taxon>
        <taxon>Lysobacterales</taxon>
        <taxon>Lysobacteraceae</taxon>
        <taxon>Xanthomonas</taxon>
    </lineage>
</organism>
<protein>
    <recommendedName>
        <fullName evidence="1">Phosphoserine aminotransferase</fullName>
        <ecNumber evidence="1">2.6.1.52</ecNumber>
    </recommendedName>
    <alternativeName>
        <fullName evidence="1">Phosphohydroxythreonine aminotransferase</fullName>
        <shortName evidence="1">PSAT</shortName>
    </alternativeName>
</protein>
<accession>Q5H079</accession>
<gene>
    <name evidence="1" type="primary">serC</name>
    <name type="ordered locus">XOO2388</name>
</gene>
<evidence type="ECO:0000255" key="1">
    <source>
        <dbReference type="HAMAP-Rule" id="MF_00160"/>
    </source>
</evidence>
<name>SERC_XANOR</name>
<proteinExistence type="inferred from homology"/>